<sequence>MSFEVFEKLEAKVQQAIDTITLLQMEIEELKEQNGSLNHQVQQASGNSEALVRENQQLKEEQHVWQERLRALLGKMEEV</sequence>
<keyword id="KW-0131">Cell cycle</keyword>
<keyword id="KW-0132">Cell division</keyword>
<keyword id="KW-0175">Coiled coil</keyword>
<keyword id="KW-0963">Cytoplasm</keyword>
<keyword id="KW-1185">Reference proteome</keyword>
<keyword id="KW-0717">Septation</keyword>
<evidence type="ECO:0000255" key="1">
    <source>
        <dbReference type="HAMAP-Rule" id="MF_01196"/>
    </source>
</evidence>
<reference key="1">
    <citation type="journal article" date="2008" name="Environ. Microbiol.">
        <title>The genome of Erwinia tasmaniensis strain Et1/99, a non-pathogenic bacterium in the genus Erwinia.</title>
        <authorList>
            <person name="Kube M."/>
            <person name="Migdoll A.M."/>
            <person name="Mueller I."/>
            <person name="Kuhl H."/>
            <person name="Beck A."/>
            <person name="Reinhardt R."/>
            <person name="Geider K."/>
        </authorList>
    </citation>
    <scope>NUCLEOTIDE SEQUENCE [LARGE SCALE GENOMIC DNA]</scope>
    <source>
        <strain>DSM 17950 / CFBP 7177 / CIP 109463 / NCPPB 4357 / Et1/99</strain>
    </source>
</reference>
<feature type="chain" id="PRO_1000138438" description="Cell division protein ZapB">
    <location>
        <begin position="1"/>
        <end position="79"/>
    </location>
</feature>
<feature type="coiled-coil region" evidence="1">
    <location>
        <begin position="4"/>
        <end position="78"/>
    </location>
</feature>
<name>ZAPB_ERWT9</name>
<gene>
    <name evidence="1" type="primary">zapB</name>
    <name type="ordered locus">ETA_01160</name>
</gene>
<proteinExistence type="inferred from homology"/>
<accession>B2VES1</accession>
<dbReference type="EMBL" id="CU468135">
    <property type="protein sequence ID" value="CAO95162.1"/>
    <property type="molecule type" value="Genomic_DNA"/>
</dbReference>
<dbReference type="RefSeq" id="WP_012439888.1">
    <property type="nucleotide sequence ID" value="NC_010694.1"/>
</dbReference>
<dbReference type="SMR" id="B2VES1"/>
<dbReference type="STRING" id="465817.ETA_01160"/>
<dbReference type="KEGG" id="eta:ETA_01160"/>
<dbReference type="eggNOG" id="COG3074">
    <property type="taxonomic scope" value="Bacteria"/>
</dbReference>
<dbReference type="HOGENOM" id="CLU_171174_2_0_6"/>
<dbReference type="OrthoDB" id="6554593at2"/>
<dbReference type="Proteomes" id="UP000001726">
    <property type="component" value="Chromosome"/>
</dbReference>
<dbReference type="GO" id="GO:0005737">
    <property type="term" value="C:cytoplasm"/>
    <property type="evidence" value="ECO:0007669"/>
    <property type="project" value="UniProtKB-SubCell"/>
</dbReference>
<dbReference type="GO" id="GO:0000917">
    <property type="term" value="P:division septum assembly"/>
    <property type="evidence" value="ECO:0007669"/>
    <property type="project" value="UniProtKB-KW"/>
</dbReference>
<dbReference type="GO" id="GO:0043093">
    <property type="term" value="P:FtsZ-dependent cytokinesis"/>
    <property type="evidence" value="ECO:0007669"/>
    <property type="project" value="UniProtKB-UniRule"/>
</dbReference>
<dbReference type="Gene3D" id="1.20.5.340">
    <property type="match status" value="1"/>
</dbReference>
<dbReference type="HAMAP" id="MF_01196">
    <property type="entry name" value="ZapB"/>
    <property type="match status" value="1"/>
</dbReference>
<dbReference type="InterPro" id="IPR009252">
    <property type="entry name" value="Cell_div_ZapB"/>
</dbReference>
<dbReference type="Pfam" id="PF06005">
    <property type="entry name" value="ZapB"/>
    <property type="match status" value="1"/>
</dbReference>
<organism>
    <name type="scientific">Erwinia tasmaniensis (strain DSM 17950 / CFBP 7177 / CIP 109463 / NCPPB 4357 / Et1/99)</name>
    <dbReference type="NCBI Taxonomy" id="465817"/>
    <lineage>
        <taxon>Bacteria</taxon>
        <taxon>Pseudomonadati</taxon>
        <taxon>Pseudomonadota</taxon>
        <taxon>Gammaproteobacteria</taxon>
        <taxon>Enterobacterales</taxon>
        <taxon>Erwiniaceae</taxon>
        <taxon>Erwinia</taxon>
    </lineage>
</organism>
<protein>
    <recommendedName>
        <fullName evidence="1">Cell division protein ZapB</fullName>
    </recommendedName>
</protein>
<comment type="function">
    <text evidence="1">Non-essential, abundant cell division factor that is required for proper Z-ring formation. It is recruited early to the divisome by direct interaction with FtsZ, stimulating Z-ring assembly and thereby promoting cell division earlier in the cell cycle. Its recruitment to the Z-ring requires functional FtsA or ZipA.</text>
</comment>
<comment type="subunit">
    <text evidence="1">Homodimer. The ends of the coiled-coil dimer bind to each other, forming polymers. Interacts with FtsZ.</text>
</comment>
<comment type="subcellular location">
    <subcellularLocation>
        <location evidence="1">Cytoplasm</location>
    </subcellularLocation>
    <text evidence="1">Localizes to the septum at mid-cell, in a FtsZ-like pattern.</text>
</comment>
<comment type="similarity">
    <text evidence="1">Belongs to the ZapB family.</text>
</comment>